<protein>
    <recommendedName>
        <fullName evidence="1">Fluoride-specific ion channel FluC</fullName>
    </recommendedName>
</protein>
<accession>Q6D7N0</accession>
<sequence>MFSTLLAVFIGGGVGSVARWQLGVKFNSLYPTLPLGTLLANLIGAFVIGGALAFFLRHPHLDQDWKILITTGLCGGLTTFSTFSAEVVMFLQSGQLAAAGLHVLLNLAGSLLMTALAFALVTWVTTH</sequence>
<reference key="1">
    <citation type="journal article" date="2004" name="Proc. Natl. Acad. Sci. U.S.A.">
        <title>Genome sequence of the enterobacterial phytopathogen Erwinia carotovora subsp. atroseptica and characterization of virulence factors.</title>
        <authorList>
            <person name="Bell K.S."/>
            <person name="Sebaihia M."/>
            <person name="Pritchard L."/>
            <person name="Holden M.T.G."/>
            <person name="Hyman L.J."/>
            <person name="Holeva M.C."/>
            <person name="Thomson N.R."/>
            <person name="Bentley S.D."/>
            <person name="Churcher L.J.C."/>
            <person name="Mungall K."/>
            <person name="Atkin R."/>
            <person name="Bason N."/>
            <person name="Brooks K."/>
            <person name="Chillingworth T."/>
            <person name="Clark K."/>
            <person name="Doggett J."/>
            <person name="Fraser A."/>
            <person name="Hance Z."/>
            <person name="Hauser H."/>
            <person name="Jagels K."/>
            <person name="Moule S."/>
            <person name="Norbertczak H."/>
            <person name="Ormond D."/>
            <person name="Price C."/>
            <person name="Quail M.A."/>
            <person name="Sanders M."/>
            <person name="Walker D."/>
            <person name="Whitehead S."/>
            <person name="Salmond G.P.C."/>
            <person name="Birch P.R.J."/>
            <person name="Parkhill J."/>
            <person name="Toth I.K."/>
        </authorList>
    </citation>
    <scope>NUCLEOTIDE SEQUENCE [LARGE SCALE GENOMIC DNA]</scope>
    <source>
        <strain>SCRI 1043 / ATCC BAA-672</strain>
    </source>
</reference>
<gene>
    <name evidence="1" type="primary">fluC</name>
    <name evidence="1" type="synonym">crcB</name>
    <name type="ordered locus">ECA1295</name>
</gene>
<proteinExistence type="inferred from homology"/>
<feature type="chain" id="PRO_0000110100" description="Fluoride-specific ion channel FluC">
    <location>
        <begin position="1"/>
        <end position="127"/>
    </location>
</feature>
<feature type="transmembrane region" description="Helical" evidence="1">
    <location>
        <begin position="4"/>
        <end position="24"/>
    </location>
</feature>
<feature type="transmembrane region" description="Helical" evidence="1">
    <location>
        <begin position="35"/>
        <end position="55"/>
    </location>
</feature>
<feature type="transmembrane region" description="Helical" evidence="1">
    <location>
        <begin position="71"/>
        <end position="91"/>
    </location>
</feature>
<feature type="transmembrane region" description="Helical" evidence="1">
    <location>
        <begin position="103"/>
        <end position="123"/>
    </location>
</feature>
<feature type="binding site" evidence="1">
    <location>
        <position position="75"/>
    </location>
    <ligand>
        <name>Na(+)</name>
        <dbReference type="ChEBI" id="CHEBI:29101"/>
        <note>structural</note>
    </ligand>
</feature>
<feature type="binding site" evidence="1">
    <location>
        <position position="78"/>
    </location>
    <ligand>
        <name>Na(+)</name>
        <dbReference type="ChEBI" id="CHEBI:29101"/>
        <note>structural</note>
    </ligand>
</feature>
<comment type="function">
    <text evidence="1">Fluoride-specific ion channel. Important for reducing fluoride concentration in the cell, thus reducing its toxicity.</text>
</comment>
<comment type="catalytic activity">
    <reaction evidence="1">
        <text>fluoride(in) = fluoride(out)</text>
        <dbReference type="Rhea" id="RHEA:76159"/>
        <dbReference type="ChEBI" id="CHEBI:17051"/>
    </reaction>
    <physiologicalReaction direction="left-to-right" evidence="1">
        <dbReference type="Rhea" id="RHEA:76160"/>
    </physiologicalReaction>
</comment>
<comment type="activity regulation">
    <text evidence="1">Na(+) is not transported, but it plays an essential structural role and its presence is essential for fluoride channel function.</text>
</comment>
<comment type="subcellular location">
    <subcellularLocation>
        <location evidence="1">Cell inner membrane</location>
        <topology evidence="1">Multi-pass membrane protein</topology>
    </subcellularLocation>
</comment>
<comment type="similarity">
    <text evidence="1">Belongs to the fluoride channel Fluc/FEX (TC 1.A.43) family.</text>
</comment>
<organism>
    <name type="scientific">Pectobacterium atrosepticum (strain SCRI 1043 / ATCC BAA-672)</name>
    <name type="common">Erwinia carotovora subsp. atroseptica</name>
    <dbReference type="NCBI Taxonomy" id="218491"/>
    <lineage>
        <taxon>Bacteria</taxon>
        <taxon>Pseudomonadati</taxon>
        <taxon>Pseudomonadota</taxon>
        <taxon>Gammaproteobacteria</taxon>
        <taxon>Enterobacterales</taxon>
        <taxon>Pectobacteriaceae</taxon>
        <taxon>Pectobacterium</taxon>
    </lineage>
</organism>
<name>FLUC_PECAS</name>
<dbReference type="EMBL" id="BX950851">
    <property type="protein sequence ID" value="CAG74205.1"/>
    <property type="molecule type" value="Genomic_DNA"/>
</dbReference>
<dbReference type="RefSeq" id="WP_011092882.1">
    <property type="nucleotide sequence ID" value="NC_004547.2"/>
</dbReference>
<dbReference type="SMR" id="Q6D7N0"/>
<dbReference type="STRING" id="218491.ECA1295"/>
<dbReference type="GeneID" id="57208105"/>
<dbReference type="KEGG" id="eca:ECA1295"/>
<dbReference type="PATRIC" id="fig|218491.5.peg.1319"/>
<dbReference type="eggNOG" id="COG0239">
    <property type="taxonomic scope" value="Bacteria"/>
</dbReference>
<dbReference type="HOGENOM" id="CLU_114342_3_3_6"/>
<dbReference type="OrthoDB" id="9806299at2"/>
<dbReference type="Proteomes" id="UP000007966">
    <property type="component" value="Chromosome"/>
</dbReference>
<dbReference type="GO" id="GO:0005886">
    <property type="term" value="C:plasma membrane"/>
    <property type="evidence" value="ECO:0007669"/>
    <property type="project" value="UniProtKB-SubCell"/>
</dbReference>
<dbReference type="GO" id="GO:0062054">
    <property type="term" value="F:fluoride channel activity"/>
    <property type="evidence" value="ECO:0007669"/>
    <property type="project" value="UniProtKB-UniRule"/>
</dbReference>
<dbReference type="GO" id="GO:0046872">
    <property type="term" value="F:metal ion binding"/>
    <property type="evidence" value="ECO:0007669"/>
    <property type="project" value="UniProtKB-KW"/>
</dbReference>
<dbReference type="GO" id="GO:0140114">
    <property type="term" value="P:cellular detoxification of fluoride"/>
    <property type="evidence" value="ECO:0007669"/>
    <property type="project" value="UniProtKB-UniRule"/>
</dbReference>
<dbReference type="HAMAP" id="MF_00454">
    <property type="entry name" value="FluC"/>
    <property type="match status" value="1"/>
</dbReference>
<dbReference type="InterPro" id="IPR003691">
    <property type="entry name" value="FluC"/>
</dbReference>
<dbReference type="NCBIfam" id="TIGR00494">
    <property type="entry name" value="crcB"/>
    <property type="match status" value="1"/>
</dbReference>
<dbReference type="NCBIfam" id="NF010792">
    <property type="entry name" value="PRK14196.1"/>
    <property type="match status" value="1"/>
</dbReference>
<dbReference type="PANTHER" id="PTHR28259">
    <property type="entry name" value="FLUORIDE EXPORT PROTEIN 1-RELATED"/>
    <property type="match status" value="1"/>
</dbReference>
<dbReference type="PANTHER" id="PTHR28259:SF1">
    <property type="entry name" value="FLUORIDE EXPORT PROTEIN 1-RELATED"/>
    <property type="match status" value="1"/>
</dbReference>
<dbReference type="Pfam" id="PF02537">
    <property type="entry name" value="CRCB"/>
    <property type="match status" value="1"/>
</dbReference>
<evidence type="ECO:0000255" key="1">
    <source>
        <dbReference type="HAMAP-Rule" id="MF_00454"/>
    </source>
</evidence>
<keyword id="KW-0997">Cell inner membrane</keyword>
<keyword id="KW-1003">Cell membrane</keyword>
<keyword id="KW-0407">Ion channel</keyword>
<keyword id="KW-0406">Ion transport</keyword>
<keyword id="KW-0472">Membrane</keyword>
<keyword id="KW-0479">Metal-binding</keyword>
<keyword id="KW-1185">Reference proteome</keyword>
<keyword id="KW-0915">Sodium</keyword>
<keyword id="KW-0812">Transmembrane</keyword>
<keyword id="KW-1133">Transmembrane helix</keyword>
<keyword id="KW-0813">Transport</keyword>